<keyword id="KW-1003">Cell membrane</keyword>
<keyword id="KW-0297">G-protein coupled receptor</keyword>
<keyword id="KW-0325">Glycoprotein</keyword>
<keyword id="KW-0472">Membrane</keyword>
<keyword id="KW-0675">Receptor</keyword>
<keyword id="KW-1185">Reference proteome</keyword>
<keyword id="KW-0807">Transducer</keyword>
<keyword id="KW-0812">Transmembrane</keyword>
<keyword id="KW-1133">Transmembrane helix</keyword>
<protein>
    <recommendedName>
        <fullName>Mas-related G-protein coupled receptor member F</fullName>
        <shortName>Mas-related gene F protein</shortName>
    </recommendedName>
</protein>
<proteinExistence type="evidence at transcript level"/>
<evidence type="ECO:0000255" key="1"/>
<evidence type="ECO:0000255" key="2">
    <source>
        <dbReference type="PROSITE-ProRule" id="PRU00521"/>
    </source>
</evidence>
<evidence type="ECO:0000256" key="3">
    <source>
        <dbReference type="SAM" id="MobiDB-lite"/>
    </source>
</evidence>
<feature type="chain" id="PRO_0000069765" description="Mas-related G-protein coupled receptor member F">
    <location>
        <begin position="1"/>
        <end position="343"/>
    </location>
</feature>
<feature type="topological domain" description="Extracellular" evidence="1">
    <location>
        <begin position="1"/>
        <end position="44"/>
    </location>
</feature>
<feature type="transmembrane region" description="Helical; Name=1" evidence="1">
    <location>
        <begin position="45"/>
        <end position="66"/>
    </location>
</feature>
<feature type="topological domain" description="Cytoplasmic" evidence="1">
    <location>
        <begin position="67"/>
        <end position="82"/>
    </location>
</feature>
<feature type="transmembrane region" description="Helical; Name=2" evidence="1">
    <location>
        <begin position="83"/>
        <end position="104"/>
    </location>
</feature>
<feature type="topological domain" description="Extracellular" evidence="1">
    <location>
        <begin position="105"/>
        <end position="123"/>
    </location>
</feature>
<feature type="transmembrane region" description="Helical; Name=3" evidence="1">
    <location>
        <begin position="124"/>
        <end position="144"/>
    </location>
</feature>
<feature type="topological domain" description="Cytoplasmic" evidence="1">
    <location>
        <begin position="145"/>
        <end position="160"/>
    </location>
</feature>
<feature type="transmembrane region" description="Helical; Name=4" evidence="1">
    <location>
        <begin position="161"/>
        <end position="181"/>
    </location>
</feature>
<feature type="topological domain" description="Extracellular" evidence="1">
    <location>
        <begin position="182"/>
        <end position="198"/>
    </location>
</feature>
<feature type="transmembrane region" description="Helical; Name=5" evidence="1">
    <location>
        <begin position="199"/>
        <end position="220"/>
    </location>
</feature>
<feature type="topological domain" description="Cytoplasmic" evidence="1">
    <location>
        <begin position="221"/>
        <end position="241"/>
    </location>
</feature>
<feature type="transmembrane region" description="Helical; Name=6" evidence="1">
    <location>
        <begin position="242"/>
        <end position="263"/>
    </location>
</feature>
<feature type="topological domain" description="Extracellular" evidence="1">
    <location>
        <begin position="264"/>
        <end position="273"/>
    </location>
</feature>
<feature type="transmembrane region" description="Helical; Name=7" evidence="1">
    <location>
        <begin position="274"/>
        <end position="294"/>
    </location>
</feature>
<feature type="topological domain" description="Cytoplasmic" evidence="1">
    <location>
        <begin position="295"/>
        <end position="343"/>
    </location>
</feature>
<feature type="region of interest" description="Disordered" evidence="3">
    <location>
        <begin position="318"/>
        <end position="343"/>
    </location>
</feature>
<feature type="compositionally biased region" description="Polar residues" evidence="3">
    <location>
        <begin position="324"/>
        <end position="343"/>
    </location>
</feature>
<feature type="glycosylation site" description="N-linked (GlcNAc...) asparagine" evidence="1">
    <location>
        <position position="4"/>
    </location>
</feature>
<dbReference type="EMBL" id="BC019711">
    <property type="protein sequence ID" value="AAH19711.1"/>
    <property type="molecule type" value="mRNA"/>
</dbReference>
<dbReference type="EMBL" id="AY042211">
    <property type="protein sequence ID" value="AAK91802.1"/>
    <property type="molecule type" value="Genomic_DNA"/>
</dbReference>
<dbReference type="CCDS" id="CCDS22056.1"/>
<dbReference type="RefSeq" id="NP_663354.1">
    <property type="nucleotide sequence ID" value="NM_145379.2"/>
</dbReference>
<dbReference type="SMR" id="Q8VCJ6"/>
<dbReference type="BioGRID" id="229246">
    <property type="interactions" value="1"/>
</dbReference>
<dbReference type="FunCoup" id="Q8VCJ6">
    <property type="interactions" value="187"/>
</dbReference>
<dbReference type="STRING" id="10090.ENSMUSP00000033386"/>
<dbReference type="GlyCosmos" id="Q8VCJ6">
    <property type="glycosylation" value="1 site, No reported glycans"/>
</dbReference>
<dbReference type="GlyGen" id="Q8VCJ6">
    <property type="glycosylation" value="1 site, 1 N-linked glycan (1 site)"/>
</dbReference>
<dbReference type="PhosphoSitePlus" id="Q8VCJ6"/>
<dbReference type="PaxDb" id="10090-ENSMUSP00000033386"/>
<dbReference type="ProteomicsDB" id="290317"/>
<dbReference type="Antibodypedia" id="16748">
    <property type="antibodies" value="275 antibodies from 30 providers"/>
</dbReference>
<dbReference type="DNASU" id="211577"/>
<dbReference type="Ensembl" id="ENSMUST00000033386.12">
    <property type="protein sequence ID" value="ENSMUSP00000033386.6"/>
    <property type="gene ID" value="ENSMUSG00000031070.16"/>
</dbReference>
<dbReference type="GeneID" id="211577"/>
<dbReference type="KEGG" id="mmu:211577"/>
<dbReference type="UCSC" id="uc009kqz.1">
    <property type="organism name" value="mouse"/>
</dbReference>
<dbReference type="AGR" id="MGI:2384823"/>
<dbReference type="CTD" id="116535"/>
<dbReference type="MGI" id="MGI:2384823">
    <property type="gene designation" value="Mrgprf"/>
</dbReference>
<dbReference type="VEuPathDB" id="HostDB:ENSMUSG00000031070"/>
<dbReference type="eggNOG" id="ENOG502SIXZ">
    <property type="taxonomic scope" value="Eukaryota"/>
</dbReference>
<dbReference type="GeneTree" id="ENSGT01030000234639"/>
<dbReference type="HOGENOM" id="CLU_009579_4_1_1"/>
<dbReference type="InParanoid" id="Q8VCJ6"/>
<dbReference type="OMA" id="RILGLCM"/>
<dbReference type="OrthoDB" id="9896011at2759"/>
<dbReference type="PhylomeDB" id="Q8VCJ6"/>
<dbReference type="TreeFam" id="TF336336"/>
<dbReference type="BioGRID-ORCS" id="211577">
    <property type="hits" value="5 hits in 77 CRISPR screens"/>
</dbReference>
<dbReference type="PRO" id="PR:Q8VCJ6"/>
<dbReference type="Proteomes" id="UP000000589">
    <property type="component" value="Chromosome 7"/>
</dbReference>
<dbReference type="RNAct" id="Q8VCJ6">
    <property type="molecule type" value="protein"/>
</dbReference>
<dbReference type="Bgee" id="ENSMUSG00000031070">
    <property type="expression patterns" value="Expressed in vault of skull and 77 other cell types or tissues"/>
</dbReference>
<dbReference type="ExpressionAtlas" id="Q8VCJ6">
    <property type="expression patterns" value="baseline and differential"/>
</dbReference>
<dbReference type="GO" id="GO:0031965">
    <property type="term" value="C:nuclear membrane"/>
    <property type="evidence" value="ECO:0007669"/>
    <property type="project" value="Ensembl"/>
</dbReference>
<dbReference type="GO" id="GO:0005654">
    <property type="term" value="C:nucleoplasm"/>
    <property type="evidence" value="ECO:0007669"/>
    <property type="project" value="Ensembl"/>
</dbReference>
<dbReference type="GO" id="GO:0005886">
    <property type="term" value="C:plasma membrane"/>
    <property type="evidence" value="ECO:0007669"/>
    <property type="project" value="UniProtKB-SubCell"/>
</dbReference>
<dbReference type="GO" id="GO:0004930">
    <property type="term" value="F:G protein-coupled receptor activity"/>
    <property type="evidence" value="ECO:0007669"/>
    <property type="project" value="UniProtKB-KW"/>
</dbReference>
<dbReference type="CDD" id="cd15109">
    <property type="entry name" value="7tmA_MrgprF"/>
    <property type="match status" value="1"/>
</dbReference>
<dbReference type="FunFam" id="1.20.1070.10:FF:000235">
    <property type="entry name" value="mas-related G-protein coupled receptor member F"/>
    <property type="match status" value="1"/>
</dbReference>
<dbReference type="Gene3D" id="1.20.1070.10">
    <property type="entry name" value="Rhodopsin 7-helix transmembrane proteins"/>
    <property type="match status" value="1"/>
</dbReference>
<dbReference type="InterPro" id="IPR000276">
    <property type="entry name" value="GPCR_Rhodpsn"/>
</dbReference>
<dbReference type="InterPro" id="IPR017452">
    <property type="entry name" value="GPCR_Rhodpsn_7TM"/>
</dbReference>
<dbReference type="InterPro" id="IPR026228">
    <property type="entry name" value="MRGPCRF"/>
</dbReference>
<dbReference type="InterPro" id="IPR026234">
    <property type="entry name" value="MRGPCRFAMILY"/>
</dbReference>
<dbReference type="PANTHER" id="PTHR11334">
    <property type="entry name" value="MAS-RELATED G-PROTEIN COUPLED RECEPTOR"/>
    <property type="match status" value="1"/>
</dbReference>
<dbReference type="PANTHER" id="PTHR11334:SF3">
    <property type="entry name" value="MAS-RELATED G-PROTEIN COUPLED RECEPTOR MEMBER F"/>
    <property type="match status" value="1"/>
</dbReference>
<dbReference type="Pfam" id="PF00001">
    <property type="entry name" value="7tm_1"/>
    <property type="match status" value="1"/>
</dbReference>
<dbReference type="PRINTS" id="PR00237">
    <property type="entry name" value="GPCRRHODOPSN"/>
</dbReference>
<dbReference type="PRINTS" id="PR02112">
    <property type="entry name" value="MRGPCRF"/>
</dbReference>
<dbReference type="PRINTS" id="PR02108">
    <property type="entry name" value="MRGPCRFAMILY"/>
</dbReference>
<dbReference type="SUPFAM" id="SSF81321">
    <property type="entry name" value="Family A G protein-coupled receptor-like"/>
    <property type="match status" value="1"/>
</dbReference>
<dbReference type="PROSITE" id="PS00237">
    <property type="entry name" value="G_PROTEIN_RECEP_F1_1"/>
    <property type="match status" value="1"/>
</dbReference>
<dbReference type="PROSITE" id="PS50262">
    <property type="entry name" value="G_PROTEIN_RECEP_F1_2"/>
    <property type="match status" value="1"/>
</dbReference>
<reference key="1">
    <citation type="journal article" date="2004" name="Genome Res.">
        <title>The status, quality, and expansion of the NIH full-length cDNA project: the Mammalian Gene Collection (MGC).</title>
        <authorList>
            <consortium name="The MGC Project Team"/>
        </authorList>
    </citation>
    <scope>NUCLEOTIDE SEQUENCE [LARGE SCALE MRNA]</scope>
    <source>
        <tissue>Colon</tissue>
    </source>
</reference>
<reference key="2">
    <citation type="journal article" date="2001" name="Cell">
        <title>A diverse family of GPCRs expressed in specific subsets of nociceptive sensory neurons.</title>
        <authorList>
            <person name="Dong X."/>
            <person name="Han S.-K."/>
            <person name="Zylka M.J."/>
            <person name="Simon M.I."/>
            <person name="Anderson D.J."/>
        </authorList>
    </citation>
    <scope>NUCLEOTIDE SEQUENCE [GENOMIC DNA] OF 25-343</scope>
    <source>
        <strain>C57BL/6J</strain>
    </source>
</reference>
<organism>
    <name type="scientific">Mus musculus</name>
    <name type="common">Mouse</name>
    <dbReference type="NCBI Taxonomy" id="10090"/>
    <lineage>
        <taxon>Eukaryota</taxon>
        <taxon>Metazoa</taxon>
        <taxon>Chordata</taxon>
        <taxon>Craniata</taxon>
        <taxon>Vertebrata</taxon>
        <taxon>Euteleostomi</taxon>
        <taxon>Mammalia</taxon>
        <taxon>Eutheria</taxon>
        <taxon>Euarchontoglires</taxon>
        <taxon>Glires</taxon>
        <taxon>Rodentia</taxon>
        <taxon>Myomorpha</taxon>
        <taxon>Muroidea</taxon>
        <taxon>Muridae</taxon>
        <taxon>Murinae</taxon>
        <taxon>Mus</taxon>
        <taxon>Mus</taxon>
    </lineage>
</organism>
<gene>
    <name type="primary">Mrgprf</name>
    <name type="synonym">Mrgf</name>
</gene>
<sequence>MAGNCSWEAHSTNQNKMCPGMSEARELYSRGFLTIEQIATLPPPAVTNYIFLLLCLCGLVGNGLVLWFFGFSIKRTPFSIYFLHLASADGMYLFSKAVIALLNMGTFLGSFPDYIRRVSRIVGLCTFFTGVSLLPAISIERCVSVIFPTWYWRRRPKRLSAGVCALLWMLSFLVTSIHNYFCMFLGHEAPGTVCRNMDIALGILLFFLFCPLMVLPCLALILHVECRARRRQRSAKLNHVVLAIVSVFLVSSIYLGIDWFLFWVFQIPAPFPEYVTDLCICINSSAKPIVYFLAGRDKSQRLWEPLRVVFQRALRDGAEPGDAASSTPNTVTMEMQCPSGNAS</sequence>
<name>MRGRF_MOUSE</name>
<comment type="function">
    <text>Orphan receptor. May bind to a neuropeptide and may regulate nociceptor function and/or development, including the sensation or modulation of pain.</text>
</comment>
<comment type="subcellular location">
    <subcellularLocation>
        <location>Cell membrane</location>
        <topology>Multi-pass membrane protein</topology>
    </subcellularLocation>
</comment>
<comment type="similarity">
    <text evidence="2">Belongs to the G-protein coupled receptor 1 family. Mas subfamily.</text>
</comment>
<accession>Q8VCJ6</accession>
<accession>Q91ZB6</accession>